<keyword id="KW-0067">ATP-binding</keyword>
<keyword id="KW-0375">Hydrogen ion transport</keyword>
<keyword id="KW-0406">Ion transport</keyword>
<keyword id="KW-0547">Nucleotide-binding</keyword>
<keyword id="KW-1278">Translocase</keyword>
<keyword id="KW-0813">Transport</keyword>
<accession>Q04238</accession>
<evidence type="ECO:0000255" key="1">
    <source>
        <dbReference type="PROSITE-ProRule" id="PRU10106"/>
    </source>
</evidence>
<evidence type="ECO:0000305" key="2"/>
<name>VATA2_EQUAR</name>
<comment type="function">
    <text>Catalytic subunit of the peripheral V1 complex of vacuolar ATPase. V-ATPase vacuolar ATPase is responsible for acidifying a variety of intracellular compartments in eukaryotic cells.</text>
</comment>
<comment type="catalytic activity">
    <reaction evidence="1">
        <text>ATP + H2O + 4 H(+)(in) = ADP + phosphate + 5 H(+)(out)</text>
        <dbReference type="Rhea" id="RHEA:57720"/>
        <dbReference type="ChEBI" id="CHEBI:15377"/>
        <dbReference type="ChEBI" id="CHEBI:15378"/>
        <dbReference type="ChEBI" id="CHEBI:30616"/>
        <dbReference type="ChEBI" id="CHEBI:43474"/>
        <dbReference type="ChEBI" id="CHEBI:456216"/>
        <dbReference type="EC" id="7.1.2.2"/>
    </reaction>
</comment>
<comment type="subunit">
    <text>V-ATPase is a heteromultimeric enzyme composed of a peripheral catalytic V1 complex (main components: subunits A, B, C, D, E, and F) attached to an integral membrane V0 proton pore complex (main component: the proteolipid protein).</text>
</comment>
<comment type="miscellaneous">
    <text>Two separate genes encode the catalytic 70 kDa V-ATPase subunit in psilotum and equisetum.</text>
</comment>
<comment type="similarity">
    <text evidence="2">Belongs to the ATPase alpha/beta chains family.</text>
</comment>
<sequence length="30" mass="3372">AEVPMPLRQLTMTLPDGREESVMERTTLVA</sequence>
<organism>
    <name type="scientific">Equisetum arvense</name>
    <name type="common">Field horsetail</name>
    <name type="synonym">Common horsetail</name>
    <dbReference type="NCBI Taxonomy" id="3258"/>
    <lineage>
        <taxon>Eukaryota</taxon>
        <taxon>Viridiplantae</taxon>
        <taxon>Streptophyta</taxon>
        <taxon>Embryophyta</taxon>
        <taxon>Tracheophyta</taxon>
        <taxon>Polypodiopsida</taxon>
        <taxon>Equisetidae</taxon>
        <taxon>Equisetales</taxon>
        <taxon>Equisetaceae</taxon>
        <taxon>Equisetum</taxon>
    </lineage>
</organism>
<reference key="1">
    <citation type="journal article" date="1993" name="FEBS Lett.">
        <title>A conserved intron in the V-ATPase A subunit genes of plants and algae.</title>
        <authorList>
            <person name="Starke T."/>
            <person name="Gogarten J.P."/>
        </authorList>
    </citation>
    <scope>NUCLEOTIDE SEQUENCE [GENOMIC DNA]</scope>
</reference>
<proteinExistence type="inferred from homology"/>
<feature type="chain" id="PRO_0000144585" description="V-type proton ATPase catalytic subunit A isoform 2">
    <location>
        <begin position="1" status="less than"/>
        <end position="30" status="greater than"/>
    </location>
</feature>
<feature type="non-terminal residue">
    <location>
        <position position="1"/>
    </location>
</feature>
<feature type="non-terminal residue">
    <location>
        <position position="30"/>
    </location>
</feature>
<dbReference type="EC" id="7.1.2.2"/>
<dbReference type="EMBL" id="X56984">
    <property type="protein sequence ID" value="CAA40302.1"/>
    <property type="molecule type" value="Genomic_DNA"/>
</dbReference>
<dbReference type="PIR" id="S21815">
    <property type="entry name" value="S21815"/>
</dbReference>
<dbReference type="GO" id="GO:0005524">
    <property type="term" value="F:ATP binding"/>
    <property type="evidence" value="ECO:0007669"/>
    <property type="project" value="UniProtKB-KW"/>
</dbReference>
<dbReference type="GO" id="GO:1902600">
    <property type="term" value="P:proton transmembrane transport"/>
    <property type="evidence" value="ECO:0007669"/>
    <property type="project" value="UniProtKB-KW"/>
</dbReference>
<protein>
    <recommendedName>
        <fullName>V-type proton ATPase catalytic subunit A isoform 2</fullName>
        <shortName>V-ATPase subunit A 2</shortName>
    </recommendedName>
    <alternativeName>
        <fullName>Vacuolar proton pump subunit alpha 2</fullName>
        <ecNumber>7.1.2.2</ecNumber>
    </alternativeName>
</protein>